<accession>Q59XB0</accession>
<accession>A0A1D8PMZ9</accession>
<organism>
    <name type="scientific">Candida albicans (strain SC5314 / ATCC MYA-2876)</name>
    <name type="common">Yeast</name>
    <dbReference type="NCBI Taxonomy" id="237561"/>
    <lineage>
        <taxon>Eukaryota</taxon>
        <taxon>Fungi</taxon>
        <taxon>Dikarya</taxon>
        <taxon>Ascomycota</taxon>
        <taxon>Saccharomycotina</taxon>
        <taxon>Pichiomycetes</taxon>
        <taxon>Debaryomycetaceae</taxon>
        <taxon>Candida/Lodderomyces clade</taxon>
        <taxon>Candida</taxon>
    </lineage>
</organism>
<protein>
    <recommendedName>
        <fullName>Cell wall protein IFF7</fullName>
    </recommendedName>
    <alternativeName>
        <fullName>Adhesin-like protein IFF7</fullName>
    </alternativeName>
</protein>
<proteinExistence type="evidence at protein level"/>
<evidence type="ECO:0000250" key="1"/>
<evidence type="ECO:0000255" key="2"/>
<evidence type="ECO:0000256" key="3">
    <source>
        <dbReference type="SAM" id="MobiDB-lite"/>
    </source>
</evidence>
<evidence type="ECO:0000269" key="4">
    <source>
    </source>
</evidence>
<evidence type="ECO:0000269" key="5">
    <source>
    </source>
</evidence>
<evidence type="ECO:0000305" key="6"/>
<dbReference type="EMBL" id="CP017627">
    <property type="protein sequence ID" value="AOW29514.1"/>
    <property type="molecule type" value="Genomic_DNA"/>
</dbReference>
<dbReference type="RefSeq" id="XP_714201.2">
    <property type="nucleotide sequence ID" value="XM_709108.2"/>
</dbReference>
<dbReference type="SMR" id="Q59XB0"/>
<dbReference type="STRING" id="237561.Q59XB0"/>
<dbReference type="GlyCosmos" id="Q59XB0">
    <property type="glycosylation" value="11 sites, No reported glycans"/>
</dbReference>
<dbReference type="EnsemblFungi" id="C5_00710W_A-T">
    <property type="protein sequence ID" value="C5_00710W_A-T-p1"/>
    <property type="gene ID" value="C5_00710W_A"/>
</dbReference>
<dbReference type="GeneID" id="3644117"/>
<dbReference type="KEGG" id="cal:CAALFM_C500710WA"/>
<dbReference type="CGD" id="CAL0000190849">
    <property type="gene designation" value="IFF8"/>
</dbReference>
<dbReference type="VEuPathDB" id="FungiDB:C5_00710W_A"/>
<dbReference type="HOGENOM" id="CLU_006199_2_0_1"/>
<dbReference type="InParanoid" id="Q59XB0"/>
<dbReference type="OrthoDB" id="4022214at2759"/>
<dbReference type="PRO" id="PR:Q59XB0"/>
<dbReference type="Proteomes" id="UP000000559">
    <property type="component" value="Chromosome 5"/>
</dbReference>
<dbReference type="GO" id="GO:0005576">
    <property type="term" value="C:extracellular region"/>
    <property type="evidence" value="ECO:0007669"/>
    <property type="project" value="UniProtKB-KW"/>
</dbReference>
<dbReference type="GO" id="GO:0009277">
    <property type="term" value="C:fungal-type cell wall"/>
    <property type="evidence" value="ECO:0000314"/>
    <property type="project" value="CGD"/>
</dbReference>
<dbReference type="GO" id="GO:0098552">
    <property type="term" value="C:side of membrane"/>
    <property type="evidence" value="ECO:0007669"/>
    <property type="project" value="UniProtKB-KW"/>
</dbReference>
<dbReference type="InterPro" id="IPR021031">
    <property type="entry name" value="Hyphal-reg_cell_wall_N"/>
</dbReference>
<dbReference type="Pfam" id="PF11765">
    <property type="entry name" value="Hyphal_reg_CWP"/>
    <property type="match status" value="1"/>
</dbReference>
<name>IFF8_CANAL</name>
<comment type="function">
    <text evidence="1">GPI-anchored cell wall protein involved in cell wall organization, hyphal growth, as well as in host-fungal interaction and virulence.</text>
</comment>
<comment type="subcellular location">
    <subcellularLocation>
        <location evidence="4">Secreted</location>
        <location evidence="4">Cell wall</location>
    </subcellularLocation>
    <subcellularLocation>
        <location evidence="6">Membrane</location>
        <topology evidence="6">Lipid-anchor</topology>
        <topology evidence="6">GPI-anchor</topology>
    </subcellularLocation>
</comment>
<comment type="induction">
    <text evidence="5">Expression is down-regulated in absence of GOA1.</text>
</comment>
<comment type="PTM">
    <text>The GPI-anchor is attached to the protein in the endoplasmic reticulum and serves to target the protein to the cell surface. There, the glucosamine-inositol phospholipid moiety is cleaved off and the GPI-modified mannoprotein is covalently attached via its lipidless GPI glycan remnant to the 1,6-beta-glucan of the outer cell wall layer.</text>
</comment>
<comment type="similarity">
    <text evidence="6">Belongs to the HYR1/IFF family.</text>
</comment>
<feature type="signal peptide" evidence="2">
    <location>
        <begin position="1"/>
        <end position="19"/>
    </location>
</feature>
<feature type="chain" id="PRO_0000424766" description="Cell wall protein IFF7">
    <location>
        <begin position="20"/>
        <end position="690"/>
    </location>
</feature>
<feature type="propeptide" id="PRO_0000424767" description="Removed in mature form" evidence="2">
    <location>
        <begin position="691"/>
        <end position="714"/>
    </location>
</feature>
<feature type="region of interest" description="Disordered" evidence="3">
    <location>
        <begin position="320"/>
        <end position="633"/>
    </location>
</feature>
<feature type="region of interest" description="Disordered" evidence="3">
    <location>
        <begin position="660"/>
        <end position="692"/>
    </location>
</feature>
<feature type="compositionally biased region" description="Polar residues" evidence="3">
    <location>
        <begin position="320"/>
        <end position="330"/>
    </location>
</feature>
<feature type="compositionally biased region" description="Low complexity" evidence="3">
    <location>
        <begin position="346"/>
        <end position="504"/>
    </location>
</feature>
<feature type="compositionally biased region" description="Polar residues" evidence="3">
    <location>
        <begin position="505"/>
        <end position="519"/>
    </location>
</feature>
<feature type="compositionally biased region" description="Low complexity" evidence="3">
    <location>
        <begin position="520"/>
        <end position="544"/>
    </location>
</feature>
<feature type="compositionally biased region" description="Polar residues" evidence="3">
    <location>
        <begin position="545"/>
        <end position="558"/>
    </location>
</feature>
<feature type="compositionally biased region" description="Low complexity" evidence="3">
    <location>
        <begin position="559"/>
        <end position="590"/>
    </location>
</feature>
<feature type="compositionally biased region" description="Low complexity" evidence="3">
    <location>
        <begin position="597"/>
        <end position="625"/>
    </location>
</feature>
<feature type="compositionally biased region" description="Low complexity" evidence="3">
    <location>
        <begin position="665"/>
        <end position="679"/>
    </location>
</feature>
<feature type="lipid moiety-binding region" description="GPI-anchor amidated asparagine" evidence="2">
    <location>
        <position position="690"/>
    </location>
</feature>
<feature type="glycosylation site" description="N-linked (GlcNAc...) asparagine" evidence="2">
    <location>
        <position position="200"/>
    </location>
</feature>
<feature type="glycosylation site" description="N-linked (GlcNAc...) asparagine" evidence="2">
    <location>
        <position position="390"/>
    </location>
</feature>
<feature type="glycosylation site" description="N-linked (GlcNAc...) asparagine" evidence="2">
    <location>
        <position position="394"/>
    </location>
</feature>
<feature type="glycosylation site" description="N-linked (GlcNAc...) asparagine" evidence="2">
    <location>
        <position position="399"/>
    </location>
</feature>
<feature type="glycosylation site" description="N-linked (GlcNAc...) asparagine" evidence="2">
    <location>
        <position position="421"/>
    </location>
</feature>
<feature type="glycosylation site" description="N-linked (GlcNAc...) asparagine" evidence="2">
    <location>
        <position position="473"/>
    </location>
</feature>
<feature type="glycosylation site" description="N-linked (GlcNAc...) asparagine" evidence="2">
    <location>
        <position position="577"/>
    </location>
</feature>
<feature type="glycosylation site" description="N-linked (GlcNAc...) asparagine" evidence="2">
    <location>
        <position position="621"/>
    </location>
</feature>
<feature type="glycosylation site" description="N-linked (GlcNAc...) asparagine" evidence="2">
    <location>
        <position position="624"/>
    </location>
</feature>
<feature type="glycosylation site" description="N-linked (GlcNAc...) asparagine" evidence="2">
    <location>
        <position position="663"/>
    </location>
</feature>
<feature type="glycosylation site" description="N-linked (GlcNAc...) asparagine" evidence="2">
    <location>
        <position position="690"/>
    </location>
</feature>
<sequence>MLFTLSILSTLLFSTSISAIEITQNRVDHGTITTSIGDITIDSGAYWSIIDNSISTFIGNLDIKSNAGLYISSTISNLPLLVLLNSGSASITNDGIVSLDARTSTQGSSQFNLVGGSFENNGEFYLAASGAIPMTMGLTGKSWNNNGLIVAYQNERSSGSVKFGVIGQTITNKGQICLTNQVYQQTSKIDGSGCVTAKKNASIYISNVLDPQSVSTEQNYFLADDKSSIITQAVGFNTQVINVFGFGNGNKIGLTLPLKSGNGGQAYSYDSDSGVLSLSSGLFGQKFNIGPGYDSKLFSIVTDNSEGIPSVNNGAVSYSGPVPSQKSLPSACNVECKPVPNAPDDGSSSSSSVVSSTTSTASTDSASLSSTSGEESSASTTTTESSETSNTSSNASETNGSSTESETTGSATTSEASETINSSESSETSGASETSQSTGTSESSETESSVTESSETDSITATTSDTTSSGNDNSSVTSSSDASTDSITSETASSSSTPLSGDSSQVSSLTTGTSPDTIASFQTDSTSFGFGSGSPSSGAVQSSGVTNSTPNTGDVNTQSNTANIATSDNTATSTASNDTGVNTATATTTGTGTGPDNNNNNNNNNNNNNNNNNNNNNNNNNNTNNSGVSAADSKASGDISTVTASSTTLISVASVSSTYPIANESSSPSSSSSSSSSSSGTPGEVIPNANGSSKLSIGMTFMISGFATMFALFM</sequence>
<reference key="1">
    <citation type="journal article" date="2004" name="Proc. Natl. Acad. Sci. U.S.A.">
        <title>The diploid genome sequence of Candida albicans.</title>
        <authorList>
            <person name="Jones T."/>
            <person name="Federspiel N.A."/>
            <person name="Chibana H."/>
            <person name="Dungan J."/>
            <person name="Kalman S."/>
            <person name="Magee B.B."/>
            <person name="Newport G."/>
            <person name="Thorstenson Y.R."/>
            <person name="Agabian N."/>
            <person name="Magee P.T."/>
            <person name="Davis R.W."/>
            <person name="Scherer S."/>
        </authorList>
    </citation>
    <scope>NUCLEOTIDE SEQUENCE [LARGE SCALE GENOMIC DNA]</scope>
    <source>
        <strain>SC5314 / ATCC MYA-2876</strain>
    </source>
</reference>
<reference key="2">
    <citation type="journal article" date="2007" name="Genome Biol.">
        <title>Assembly of the Candida albicans genome into sixteen supercontigs aligned on the eight chromosomes.</title>
        <authorList>
            <person name="van het Hoog M."/>
            <person name="Rast T.J."/>
            <person name="Martchenko M."/>
            <person name="Grindle S."/>
            <person name="Dignard D."/>
            <person name="Hogues H."/>
            <person name="Cuomo C."/>
            <person name="Berriman M."/>
            <person name="Scherer S."/>
            <person name="Magee B.B."/>
            <person name="Whiteway M."/>
            <person name="Chibana H."/>
            <person name="Nantel A."/>
            <person name="Magee P.T."/>
        </authorList>
    </citation>
    <scope>GENOME REANNOTATION</scope>
    <source>
        <strain>SC5314 / ATCC MYA-2876</strain>
    </source>
</reference>
<reference key="3">
    <citation type="journal article" date="2013" name="Genome Biol.">
        <title>Assembly of a phased diploid Candida albicans genome facilitates allele-specific measurements and provides a simple model for repeat and indel structure.</title>
        <authorList>
            <person name="Muzzey D."/>
            <person name="Schwartz K."/>
            <person name="Weissman J.S."/>
            <person name="Sherlock G."/>
        </authorList>
    </citation>
    <scope>NUCLEOTIDE SEQUENCE [LARGE SCALE GENOMIC DNA]</scope>
    <scope>GENOME REANNOTATION</scope>
    <source>
        <strain>SC5314 / ATCC MYA-2876</strain>
    </source>
</reference>
<reference key="4">
    <citation type="journal article" date="2003" name="Yeast">
        <title>Genome-wide identification of fungal GPI proteins.</title>
        <authorList>
            <person name="De Groot P.W."/>
            <person name="Hellingwerf K.J."/>
            <person name="Klis F.M."/>
        </authorList>
    </citation>
    <scope>PREDICTION OF GPI-ANCHOR</scope>
</reference>
<reference key="5">
    <citation type="journal article" date="2007" name="Infect. Immun.">
        <title>Candida albicans Iff11, a secreted protein required for cell wall structure and virulence.</title>
        <authorList>
            <person name="Bates S."/>
            <person name="de la Rosa J.M."/>
            <person name="MacCallum D.M."/>
            <person name="Brown A.J."/>
            <person name="Gow N.A."/>
            <person name="Odds F.C."/>
        </authorList>
    </citation>
    <scope>IDENTIFICATION IN THE HYR1/IFF FAMILY</scope>
</reference>
<reference key="6">
    <citation type="journal article" date="2011" name="Eukaryot. Cell">
        <title>Unexpected role for a serine/threonine-rich domain in the Candida albicans Iff protein family.</title>
        <authorList>
            <person name="Boisrame A."/>
            <person name="Cornu A."/>
            <person name="Da Costa G."/>
            <person name="Richard M.L."/>
        </authorList>
    </citation>
    <scope>SUBCELLULAR LOCATION</scope>
</reference>
<reference key="7">
    <citation type="journal article" date="2013" name="Cell. Microbiol.">
        <title>Cell surface changes in the Candida albicans mitochondrial mutant goa1Delta are associated with reduced recognition by innate immune cells.</title>
        <authorList>
            <person name="She X."/>
            <person name="Zhang L."/>
            <person name="Chen H."/>
            <person name="Calderone R."/>
            <person name="Li D."/>
        </authorList>
    </citation>
    <scope>INDUCTION</scope>
</reference>
<keyword id="KW-0134">Cell wall</keyword>
<keyword id="KW-0325">Glycoprotein</keyword>
<keyword id="KW-0336">GPI-anchor</keyword>
<keyword id="KW-0449">Lipoprotein</keyword>
<keyword id="KW-0472">Membrane</keyword>
<keyword id="KW-1185">Reference proteome</keyword>
<keyword id="KW-0964">Secreted</keyword>
<keyword id="KW-0732">Signal</keyword>
<keyword id="KW-0843">Virulence</keyword>
<gene>
    <name type="primary">IFF8</name>
    <name type="ordered locus">CAALFM_C500710WA</name>
    <name type="ORF">CaO19.570</name>
    <name type="ORF">CaO19.8201</name>
</gene>